<dbReference type="EMBL" id="CP000507">
    <property type="protein sequence ID" value="ABM00136.1"/>
    <property type="molecule type" value="Genomic_DNA"/>
</dbReference>
<dbReference type="RefSeq" id="WP_011760043.1">
    <property type="nucleotide sequence ID" value="NC_008700.1"/>
</dbReference>
<dbReference type="SMR" id="A1S6X9"/>
<dbReference type="STRING" id="326297.Sama_1930"/>
<dbReference type="DNASU" id="4604180"/>
<dbReference type="KEGG" id="saz:Sama_1930"/>
<dbReference type="eggNOG" id="COG0850">
    <property type="taxonomic scope" value="Bacteria"/>
</dbReference>
<dbReference type="HOGENOM" id="CLU_067812_0_1_6"/>
<dbReference type="OrthoDB" id="9794530at2"/>
<dbReference type="Proteomes" id="UP000009175">
    <property type="component" value="Chromosome"/>
</dbReference>
<dbReference type="GO" id="GO:0000902">
    <property type="term" value="P:cell morphogenesis"/>
    <property type="evidence" value="ECO:0007669"/>
    <property type="project" value="InterPro"/>
</dbReference>
<dbReference type="GO" id="GO:0000917">
    <property type="term" value="P:division septum assembly"/>
    <property type="evidence" value="ECO:0007669"/>
    <property type="project" value="UniProtKB-KW"/>
</dbReference>
<dbReference type="GO" id="GO:0051302">
    <property type="term" value="P:regulation of cell division"/>
    <property type="evidence" value="ECO:0007669"/>
    <property type="project" value="InterPro"/>
</dbReference>
<dbReference type="GO" id="GO:1901891">
    <property type="term" value="P:regulation of cell septum assembly"/>
    <property type="evidence" value="ECO:0007669"/>
    <property type="project" value="InterPro"/>
</dbReference>
<dbReference type="Gene3D" id="2.160.20.70">
    <property type="match status" value="1"/>
</dbReference>
<dbReference type="Gene3D" id="3.30.70.260">
    <property type="match status" value="1"/>
</dbReference>
<dbReference type="HAMAP" id="MF_00267">
    <property type="entry name" value="MinC"/>
    <property type="match status" value="1"/>
</dbReference>
<dbReference type="InterPro" id="IPR016098">
    <property type="entry name" value="CAP/MinC_C"/>
</dbReference>
<dbReference type="InterPro" id="IPR013033">
    <property type="entry name" value="MinC"/>
</dbReference>
<dbReference type="InterPro" id="IPR036145">
    <property type="entry name" value="MinC_C_sf"/>
</dbReference>
<dbReference type="InterPro" id="IPR007874">
    <property type="entry name" value="MinC_N"/>
</dbReference>
<dbReference type="InterPro" id="IPR005526">
    <property type="entry name" value="Septum_form_inhib_MinC_C"/>
</dbReference>
<dbReference type="NCBIfam" id="TIGR01222">
    <property type="entry name" value="minC"/>
    <property type="match status" value="1"/>
</dbReference>
<dbReference type="PANTHER" id="PTHR34108">
    <property type="entry name" value="SEPTUM SITE-DETERMINING PROTEIN MINC"/>
    <property type="match status" value="1"/>
</dbReference>
<dbReference type="PANTHER" id="PTHR34108:SF1">
    <property type="entry name" value="SEPTUM SITE-DETERMINING PROTEIN MINC"/>
    <property type="match status" value="1"/>
</dbReference>
<dbReference type="Pfam" id="PF03775">
    <property type="entry name" value="MinC_C"/>
    <property type="match status" value="1"/>
</dbReference>
<dbReference type="Pfam" id="PF05209">
    <property type="entry name" value="MinC_N"/>
    <property type="match status" value="1"/>
</dbReference>
<dbReference type="SUPFAM" id="SSF63848">
    <property type="entry name" value="Cell-division inhibitor MinC, C-terminal domain"/>
    <property type="match status" value="1"/>
</dbReference>
<keyword id="KW-0131">Cell cycle</keyword>
<keyword id="KW-0132">Cell division</keyword>
<keyword id="KW-1185">Reference proteome</keyword>
<keyword id="KW-0717">Septation</keyword>
<organism>
    <name type="scientific">Shewanella amazonensis (strain ATCC BAA-1098 / SB2B)</name>
    <dbReference type="NCBI Taxonomy" id="326297"/>
    <lineage>
        <taxon>Bacteria</taxon>
        <taxon>Pseudomonadati</taxon>
        <taxon>Pseudomonadota</taxon>
        <taxon>Gammaproteobacteria</taxon>
        <taxon>Alteromonadales</taxon>
        <taxon>Shewanellaceae</taxon>
        <taxon>Shewanella</taxon>
    </lineage>
</organism>
<name>MINC_SHEAM</name>
<reference key="1">
    <citation type="submission" date="2006-12" db="EMBL/GenBank/DDBJ databases">
        <title>Complete sequence of Shewanella amazonensis SB2B.</title>
        <authorList>
            <consortium name="US DOE Joint Genome Institute"/>
            <person name="Copeland A."/>
            <person name="Lucas S."/>
            <person name="Lapidus A."/>
            <person name="Barry K."/>
            <person name="Detter J.C."/>
            <person name="Glavina del Rio T."/>
            <person name="Hammon N."/>
            <person name="Israni S."/>
            <person name="Dalin E."/>
            <person name="Tice H."/>
            <person name="Pitluck S."/>
            <person name="Munk A.C."/>
            <person name="Brettin T."/>
            <person name="Bruce D."/>
            <person name="Han C."/>
            <person name="Tapia R."/>
            <person name="Gilna P."/>
            <person name="Schmutz J."/>
            <person name="Larimer F."/>
            <person name="Land M."/>
            <person name="Hauser L."/>
            <person name="Kyrpides N."/>
            <person name="Mikhailova N."/>
            <person name="Fredrickson J."/>
            <person name="Richardson P."/>
        </authorList>
    </citation>
    <scope>NUCLEOTIDE SEQUENCE [LARGE SCALE GENOMIC DNA]</scope>
    <source>
        <strain>ATCC BAA-1098 / SB2B</strain>
    </source>
</reference>
<accession>A1S6X9</accession>
<proteinExistence type="inferred from homology"/>
<protein>
    <recommendedName>
        <fullName evidence="1">Probable septum site-determining protein MinC</fullName>
    </recommendedName>
</protein>
<gene>
    <name evidence="1" type="primary">minC</name>
    <name type="ordered locus">Sama_1930</name>
</gene>
<feature type="chain" id="PRO_1000047854" description="Probable septum site-determining protein MinC">
    <location>
        <begin position="1"/>
        <end position="224"/>
    </location>
</feature>
<sequence length="224" mass="23594">MRKASLELKGSSFTLSVLHINTSDLDSITLDLDKKLAQAPQFFIGAPLVLNLSAVEDGKLDLAALKDLLVSRQLVIVGVTGASEALSEQAKACGLASVKAGKQTQMPSPPSEPRTTRIVRQNVRSGQQIYVKNGDLIIFGAVGNGAEVIADGSIHIYGALRGKAMAGANGERDAVILASHLEPELISIAGQYWLTENLQKHGVTAKSGCVRLDGDSLTVEALPL</sequence>
<evidence type="ECO:0000255" key="1">
    <source>
        <dbReference type="HAMAP-Rule" id="MF_00267"/>
    </source>
</evidence>
<comment type="function">
    <text evidence="1">Cell division inhibitor that blocks the formation of polar Z ring septums. Rapidly oscillates between the poles of the cell to destabilize FtsZ filaments that have formed before they mature into polar Z rings. Prevents FtsZ polymerization.</text>
</comment>
<comment type="subunit">
    <text evidence="1">Interacts with MinD and FtsZ.</text>
</comment>
<comment type="similarity">
    <text evidence="1">Belongs to the MinC family.</text>
</comment>